<dbReference type="EMBL" id="CP000024">
    <property type="protein sequence ID" value="AAV61673.1"/>
    <property type="molecule type" value="Genomic_DNA"/>
</dbReference>
<dbReference type="RefSeq" id="WP_002949053.1">
    <property type="nucleotide sequence ID" value="NC_006449.1"/>
</dbReference>
<dbReference type="SMR" id="Q5M1Y4"/>
<dbReference type="GeneID" id="66897974"/>
<dbReference type="KEGG" id="stc:str0056"/>
<dbReference type="HOGENOM" id="CLU_087936_1_0_9"/>
<dbReference type="GO" id="GO:0005737">
    <property type="term" value="C:cytoplasm"/>
    <property type="evidence" value="ECO:0007669"/>
    <property type="project" value="UniProtKB-SubCell"/>
</dbReference>
<dbReference type="GO" id="GO:0009379">
    <property type="term" value="C:Holliday junction helicase complex"/>
    <property type="evidence" value="ECO:0007669"/>
    <property type="project" value="InterPro"/>
</dbReference>
<dbReference type="GO" id="GO:0048476">
    <property type="term" value="C:Holliday junction resolvase complex"/>
    <property type="evidence" value="ECO:0007669"/>
    <property type="project" value="UniProtKB-UniRule"/>
</dbReference>
<dbReference type="GO" id="GO:0005524">
    <property type="term" value="F:ATP binding"/>
    <property type="evidence" value="ECO:0007669"/>
    <property type="project" value="InterPro"/>
</dbReference>
<dbReference type="GO" id="GO:0000400">
    <property type="term" value="F:four-way junction DNA binding"/>
    <property type="evidence" value="ECO:0007669"/>
    <property type="project" value="UniProtKB-UniRule"/>
</dbReference>
<dbReference type="GO" id="GO:0009378">
    <property type="term" value="F:four-way junction helicase activity"/>
    <property type="evidence" value="ECO:0007669"/>
    <property type="project" value="InterPro"/>
</dbReference>
<dbReference type="GO" id="GO:0006310">
    <property type="term" value="P:DNA recombination"/>
    <property type="evidence" value="ECO:0007669"/>
    <property type="project" value="UniProtKB-UniRule"/>
</dbReference>
<dbReference type="GO" id="GO:0006281">
    <property type="term" value="P:DNA repair"/>
    <property type="evidence" value="ECO:0007669"/>
    <property type="project" value="UniProtKB-UniRule"/>
</dbReference>
<dbReference type="CDD" id="cd14332">
    <property type="entry name" value="UBA_RuvA_C"/>
    <property type="match status" value="1"/>
</dbReference>
<dbReference type="Gene3D" id="1.10.150.20">
    <property type="entry name" value="5' to 3' exonuclease, C-terminal subdomain"/>
    <property type="match status" value="1"/>
</dbReference>
<dbReference type="Gene3D" id="1.10.8.10">
    <property type="entry name" value="DNA helicase RuvA subunit, C-terminal domain"/>
    <property type="match status" value="1"/>
</dbReference>
<dbReference type="Gene3D" id="2.40.50.140">
    <property type="entry name" value="Nucleic acid-binding proteins"/>
    <property type="match status" value="1"/>
</dbReference>
<dbReference type="HAMAP" id="MF_00031">
    <property type="entry name" value="DNA_HJ_migration_RuvA"/>
    <property type="match status" value="1"/>
</dbReference>
<dbReference type="InterPro" id="IPR013849">
    <property type="entry name" value="DNA_helicase_Holl-junc_RuvA_I"/>
</dbReference>
<dbReference type="InterPro" id="IPR003583">
    <property type="entry name" value="Hlx-hairpin-Hlx_DNA-bd_motif"/>
</dbReference>
<dbReference type="InterPro" id="IPR012340">
    <property type="entry name" value="NA-bd_OB-fold"/>
</dbReference>
<dbReference type="InterPro" id="IPR000085">
    <property type="entry name" value="RuvA"/>
</dbReference>
<dbReference type="InterPro" id="IPR010994">
    <property type="entry name" value="RuvA_2-like"/>
</dbReference>
<dbReference type="InterPro" id="IPR011114">
    <property type="entry name" value="RuvA_C"/>
</dbReference>
<dbReference type="InterPro" id="IPR036267">
    <property type="entry name" value="RuvA_C_sf"/>
</dbReference>
<dbReference type="NCBIfam" id="TIGR00084">
    <property type="entry name" value="ruvA"/>
    <property type="match status" value="1"/>
</dbReference>
<dbReference type="Pfam" id="PF14520">
    <property type="entry name" value="HHH_5"/>
    <property type="match status" value="1"/>
</dbReference>
<dbReference type="Pfam" id="PF07499">
    <property type="entry name" value="RuvA_C"/>
    <property type="match status" value="1"/>
</dbReference>
<dbReference type="Pfam" id="PF01330">
    <property type="entry name" value="RuvA_N"/>
    <property type="match status" value="1"/>
</dbReference>
<dbReference type="SMART" id="SM00278">
    <property type="entry name" value="HhH1"/>
    <property type="match status" value="2"/>
</dbReference>
<dbReference type="SUPFAM" id="SSF46929">
    <property type="entry name" value="DNA helicase RuvA subunit, C-terminal domain"/>
    <property type="match status" value="1"/>
</dbReference>
<dbReference type="SUPFAM" id="SSF50249">
    <property type="entry name" value="Nucleic acid-binding proteins"/>
    <property type="match status" value="1"/>
</dbReference>
<dbReference type="SUPFAM" id="SSF47781">
    <property type="entry name" value="RuvA domain 2-like"/>
    <property type="match status" value="1"/>
</dbReference>
<reference key="1">
    <citation type="journal article" date="2004" name="Nat. Biotechnol.">
        <title>Complete sequence and comparative genome analysis of the dairy bacterium Streptococcus thermophilus.</title>
        <authorList>
            <person name="Bolotin A."/>
            <person name="Quinquis B."/>
            <person name="Renault P."/>
            <person name="Sorokin A."/>
            <person name="Ehrlich S.D."/>
            <person name="Kulakauskas S."/>
            <person name="Lapidus A."/>
            <person name="Goltsman E."/>
            <person name="Mazur M."/>
            <person name="Pusch G.D."/>
            <person name="Fonstein M."/>
            <person name="Overbeek R."/>
            <person name="Kyprides N."/>
            <person name="Purnelle B."/>
            <person name="Prozzi D."/>
            <person name="Ngui K."/>
            <person name="Masuy D."/>
            <person name="Hancy F."/>
            <person name="Burteau S."/>
            <person name="Boutry M."/>
            <person name="Delcour J."/>
            <person name="Goffeau A."/>
            <person name="Hols P."/>
        </authorList>
    </citation>
    <scope>NUCLEOTIDE SEQUENCE [LARGE SCALE GENOMIC DNA]</scope>
    <source>
        <strain>CNRZ 1066</strain>
    </source>
</reference>
<organism>
    <name type="scientific">Streptococcus thermophilus (strain CNRZ 1066)</name>
    <dbReference type="NCBI Taxonomy" id="299768"/>
    <lineage>
        <taxon>Bacteria</taxon>
        <taxon>Bacillati</taxon>
        <taxon>Bacillota</taxon>
        <taxon>Bacilli</taxon>
        <taxon>Lactobacillales</taxon>
        <taxon>Streptococcaceae</taxon>
        <taxon>Streptococcus</taxon>
    </lineage>
</organism>
<comment type="function">
    <text evidence="1">The RuvA-RuvB-RuvC complex processes Holliday junction (HJ) DNA during genetic recombination and DNA repair, while the RuvA-RuvB complex plays an important role in the rescue of blocked DNA replication forks via replication fork reversal (RFR). RuvA specifically binds to HJ cruciform DNA, conferring on it an open structure. The RuvB hexamer acts as an ATP-dependent pump, pulling dsDNA into and through the RuvAB complex. HJ branch migration allows RuvC to scan DNA until it finds its consensus sequence, where it cleaves and resolves the cruciform DNA.</text>
</comment>
<comment type="subunit">
    <text evidence="1">Homotetramer. Forms an RuvA(8)-RuvB(12)-Holliday junction (HJ) complex. HJ DNA is sandwiched between 2 RuvA tetramers; dsDNA enters through RuvA and exits via RuvB. An RuvB hexamer assembles on each DNA strand where it exits the tetramer. Each RuvB hexamer is contacted by two RuvA subunits (via domain III) on 2 adjacent RuvB subunits; this complex drives branch migration. In the full resolvosome a probable DNA-RuvA(4)-RuvB(12)-RuvC(2) complex forms which resolves the HJ.</text>
</comment>
<comment type="subcellular location">
    <subcellularLocation>
        <location evidence="1">Cytoplasm</location>
    </subcellularLocation>
</comment>
<comment type="domain">
    <text evidence="1">Has three domains with a flexible linker between the domains II and III and assumes an 'L' shape. Domain III is highly mobile and contacts RuvB.</text>
</comment>
<comment type="similarity">
    <text evidence="1">Belongs to the RuvA family.</text>
</comment>
<sequence length="196" mass="21700">MYDYIKGTLVKITAKHIVIETNGLGYIVTVANPYSFSDQMNQTIQVYLHQVIRDDAHLLFGFHTEDEKEVFLKLISVSGIGPTTALAIVAVDDNQGLVAAIDNSDIKYLMKFPKIGKKTAQQMVLDLAGKFAELPAETTNTTANQTAGNQQLDEAMEALLALGYKSTELKKVKAFFEDTNETAEQYIKSALKMLMK</sequence>
<gene>
    <name evidence="1" type="primary">ruvA</name>
    <name type="ordered locus">str0056</name>
</gene>
<accession>Q5M1Y4</accession>
<keyword id="KW-0963">Cytoplasm</keyword>
<keyword id="KW-0227">DNA damage</keyword>
<keyword id="KW-0233">DNA recombination</keyword>
<keyword id="KW-0234">DNA repair</keyword>
<keyword id="KW-0238">DNA-binding</keyword>
<evidence type="ECO:0000255" key="1">
    <source>
        <dbReference type="HAMAP-Rule" id="MF_00031"/>
    </source>
</evidence>
<feature type="chain" id="PRO_0000224915" description="Holliday junction branch migration complex subunit RuvA">
    <location>
        <begin position="1"/>
        <end position="196"/>
    </location>
</feature>
<feature type="region of interest" description="Domain I" evidence="1">
    <location>
        <begin position="1"/>
        <end position="63"/>
    </location>
</feature>
<feature type="region of interest" description="Domain II" evidence="1">
    <location>
        <begin position="64"/>
        <end position="142"/>
    </location>
</feature>
<feature type="region of interest" description="Flexible linker" evidence="1">
    <location>
        <begin position="143"/>
        <end position="146"/>
    </location>
</feature>
<feature type="region of interest" description="Domain III" evidence="1">
    <location>
        <begin position="147"/>
        <end position="196"/>
    </location>
</feature>
<protein>
    <recommendedName>
        <fullName evidence="1">Holliday junction branch migration complex subunit RuvA</fullName>
    </recommendedName>
</protein>
<proteinExistence type="inferred from homology"/>
<name>RUVA_STRT1</name>